<evidence type="ECO:0000255" key="1">
    <source>
        <dbReference type="HAMAP-Rule" id="MF_00129"/>
    </source>
</evidence>
<dbReference type="EMBL" id="CP000378">
    <property type="protein sequence ID" value="ABF77858.1"/>
    <property type="molecule type" value="Genomic_DNA"/>
</dbReference>
<dbReference type="SMR" id="Q1BR97"/>
<dbReference type="HOGENOM" id="CLU_007831_2_2_4"/>
<dbReference type="GO" id="GO:0005829">
    <property type="term" value="C:cytosol"/>
    <property type="evidence" value="ECO:0007669"/>
    <property type="project" value="TreeGrafter"/>
</dbReference>
<dbReference type="GO" id="GO:0050660">
    <property type="term" value="F:flavin adenine dinucleotide binding"/>
    <property type="evidence" value="ECO:0007669"/>
    <property type="project" value="UniProtKB-UniRule"/>
</dbReference>
<dbReference type="GO" id="GO:0030488">
    <property type="term" value="P:tRNA methylation"/>
    <property type="evidence" value="ECO:0007669"/>
    <property type="project" value="TreeGrafter"/>
</dbReference>
<dbReference type="GO" id="GO:0002098">
    <property type="term" value="P:tRNA wobble uridine modification"/>
    <property type="evidence" value="ECO:0007669"/>
    <property type="project" value="InterPro"/>
</dbReference>
<dbReference type="FunFam" id="1.10.10.1800:FF:000001">
    <property type="entry name" value="tRNA uridine 5-carboxymethylaminomethyl modification enzyme MnmG"/>
    <property type="match status" value="1"/>
</dbReference>
<dbReference type="FunFam" id="1.10.150.570:FF:000001">
    <property type="entry name" value="tRNA uridine 5-carboxymethylaminomethyl modification enzyme MnmG"/>
    <property type="match status" value="1"/>
</dbReference>
<dbReference type="FunFam" id="3.50.50.60:FF:000002">
    <property type="entry name" value="tRNA uridine 5-carboxymethylaminomethyl modification enzyme MnmG"/>
    <property type="match status" value="1"/>
</dbReference>
<dbReference type="FunFam" id="3.50.50.60:FF:000010">
    <property type="entry name" value="tRNA uridine 5-carboxymethylaminomethyl modification enzyme MnmG"/>
    <property type="match status" value="1"/>
</dbReference>
<dbReference type="Gene3D" id="3.50.50.60">
    <property type="entry name" value="FAD/NAD(P)-binding domain"/>
    <property type="match status" value="2"/>
</dbReference>
<dbReference type="Gene3D" id="1.10.150.570">
    <property type="entry name" value="GidA associated domain, C-terminal subdomain"/>
    <property type="match status" value="1"/>
</dbReference>
<dbReference type="Gene3D" id="1.10.10.1800">
    <property type="entry name" value="tRNA uridine 5-carboxymethylaminomethyl modification enzyme MnmG/GidA"/>
    <property type="match status" value="1"/>
</dbReference>
<dbReference type="HAMAP" id="MF_00129">
    <property type="entry name" value="MnmG_GidA"/>
    <property type="match status" value="1"/>
</dbReference>
<dbReference type="InterPro" id="IPR036188">
    <property type="entry name" value="FAD/NAD-bd_sf"/>
</dbReference>
<dbReference type="InterPro" id="IPR049312">
    <property type="entry name" value="GIDA_C_N"/>
</dbReference>
<dbReference type="InterPro" id="IPR004416">
    <property type="entry name" value="MnmG"/>
</dbReference>
<dbReference type="InterPro" id="IPR002218">
    <property type="entry name" value="MnmG-rel"/>
</dbReference>
<dbReference type="InterPro" id="IPR020595">
    <property type="entry name" value="MnmG-rel_CS"/>
</dbReference>
<dbReference type="InterPro" id="IPR026904">
    <property type="entry name" value="MnmG_C"/>
</dbReference>
<dbReference type="InterPro" id="IPR047001">
    <property type="entry name" value="MnmG_C_subdom"/>
</dbReference>
<dbReference type="InterPro" id="IPR044920">
    <property type="entry name" value="MnmG_C_subdom_sf"/>
</dbReference>
<dbReference type="InterPro" id="IPR040131">
    <property type="entry name" value="MnmG_N"/>
</dbReference>
<dbReference type="NCBIfam" id="TIGR00136">
    <property type="entry name" value="mnmG_gidA"/>
    <property type="match status" value="1"/>
</dbReference>
<dbReference type="PANTHER" id="PTHR11806">
    <property type="entry name" value="GLUCOSE INHIBITED DIVISION PROTEIN A"/>
    <property type="match status" value="1"/>
</dbReference>
<dbReference type="PANTHER" id="PTHR11806:SF0">
    <property type="entry name" value="PROTEIN MTO1 HOMOLOG, MITOCHONDRIAL"/>
    <property type="match status" value="1"/>
</dbReference>
<dbReference type="Pfam" id="PF01134">
    <property type="entry name" value="GIDA"/>
    <property type="match status" value="1"/>
</dbReference>
<dbReference type="Pfam" id="PF21680">
    <property type="entry name" value="GIDA_C_1st"/>
    <property type="match status" value="1"/>
</dbReference>
<dbReference type="Pfam" id="PF13932">
    <property type="entry name" value="SAM_GIDA_C"/>
    <property type="match status" value="1"/>
</dbReference>
<dbReference type="SMART" id="SM01228">
    <property type="entry name" value="GIDA_assoc_3"/>
    <property type="match status" value="1"/>
</dbReference>
<dbReference type="SUPFAM" id="SSF51905">
    <property type="entry name" value="FAD/NAD(P)-binding domain"/>
    <property type="match status" value="1"/>
</dbReference>
<dbReference type="PROSITE" id="PS01280">
    <property type="entry name" value="GIDA_1"/>
    <property type="match status" value="1"/>
</dbReference>
<dbReference type="PROSITE" id="PS01281">
    <property type="entry name" value="GIDA_2"/>
    <property type="match status" value="1"/>
</dbReference>
<keyword id="KW-0963">Cytoplasm</keyword>
<keyword id="KW-0274">FAD</keyword>
<keyword id="KW-0285">Flavoprotein</keyword>
<keyword id="KW-0520">NAD</keyword>
<keyword id="KW-0819">tRNA processing</keyword>
<protein>
    <recommendedName>
        <fullName evidence="1">tRNA uridine 5-carboxymethylaminomethyl modification enzyme MnmG</fullName>
    </recommendedName>
    <alternativeName>
        <fullName evidence="1">Glucose-inhibited division protein A</fullName>
    </alternativeName>
</protein>
<organism>
    <name type="scientific">Burkholderia orbicola (strain AU 1054)</name>
    <dbReference type="NCBI Taxonomy" id="331271"/>
    <lineage>
        <taxon>Bacteria</taxon>
        <taxon>Pseudomonadati</taxon>
        <taxon>Pseudomonadota</taxon>
        <taxon>Betaproteobacteria</taxon>
        <taxon>Burkholderiales</taxon>
        <taxon>Burkholderiaceae</taxon>
        <taxon>Burkholderia</taxon>
        <taxon>Burkholderia cepacia complex</taxon>
        <taxon>Burkholderia orbicola</taxon>
    </lineage>
</organism>
<name>MNMG_BURO1</name>
<reference key="1">
    <citation type="submission" date="2006-05" db="EMBL/GenBank/DDBJ databases">
        <title>Complete sequence of chromosome 1 of Burkholderia cenocepacia AU 1054.</title>
        <authorList>
            <consortium name="US DOE Joint Genome Institute"/>
            <person name="Copeland A."/>
            <person name="Lucas S."/>
            <person name="Lapidus A."/>
            <person name="Barry K."/>
            <person name="Detter J.C."/>
            <person name="Glavina del Rio T."/>
            <person name="Hammon N."/>
            <person name="Israni S."/>
            <person name="Dalin E."/>
            <person name="Tice H."/>
            <person name="Pitluck S."/>
            <person name="Chain P."/>
            <person name="Malfatti S."/>
            <person name="Shin M."/>
            <person name="Vergez L."/>
            <person name="Schmutz J."/>
            <person name="Larimer F."/>
            <person name="Land M."/>
            <person name="Hauser L."/>
            <person name="Kyrpides N."/>
            <person name="Lykidis A."/>
            <person name="LiPuma J.J."/>
            <person name="Konstantinidis K."/>
            <person name="Tiedje J.M."/>
            <person name="Richardson P."/>
        </authorList>
    </citation>
    <scope>NUCLEOTIDE SEQUENCE [LARGE SCALE GENOMIC DNA]</scope>
    <source>
        <strain>AU 1054</strain>
    </source>
</reference>
<sequence>MLFPTEFDVIVVGGGHAGTEAALASARMGAKTLLLTHNIETLGQMSCNPSIGGIGKGHLVKEVDALGGAMAAATDESGIQFRILNSSKGPAVRATRAQADRILYKAAIRHRLENQPNLWLFQQAVDDLMVEGDRVVGAVTQIGIRFRARAVVLTAGTFLDGKIHVGLNNYTGGRAGDPAAVSLSSRLKELKLPQGRLKTGTPPRIDGRTIDFSKLDEQPGDLDPIPVFSFLGRADQHPQQLPCWVTHTNERTHDIIRGGLDRSPMYTGVIEGVGPRYCPSIEDKIHRFASKESHQIFLEPEGLTTHEFYPNGISTSLPFDVQLELVHSMRGLENAHILRPGYAIEYDYFDPRALKASLETKAINGLFFAGQINGTTGYEEAAAQGLLAGLNAGRYVQEKDAWCPRRDQAYLGVLVDDLVTRGVAEPYRMFTSRAEYRLSLREDNADMRLTEIGRELGLVDDARWDAFSRKRDAVSRETERLKSTWVTPKTLPVEEATALLGKAIDHEYSLAELLRRPGVSYDGVCGLKGGECGPAEPLADDPVLLEQIKEQVEIGIKYQGYIERQASEIERNDANENTRLPDGIDYREVRGLSFEVSQKLNEFRPETIGQASRISGVTPAAISLLMVHLKRRGLGRRNGTAAEAAEQGDGAVPTQQ</sequence>
<comment type="function">
    <text evidence="1">NAD-binding protein involved in the addition of a carboxymethylaminomethyl (cmnm) group at the wobble position (U34) of certain tRNAs, forming tRNA-cmnm(5)s(2)U34.</text>
</comment>
<comment type="cofactor">
    <cofactor evidence="1">
        <name>FAD</name>
        <dbReference type="ChEBI" id="CHEBI:57692"/>
    </cofactor>
</comment>
<comment type="subunit">
    <text evidence="1">Homodimer. Heterotetramer of two MnmE and two MnmG subunits.</text>
</comment>
<comment type="subcellular location">
    <subcellularLocation>
        <location evidence="1">Cytoplasm</location>
    </subcellularLocation>
</comment>
<comment type="similarity">
    <text evidence="1">Belongs to the MnmG family.</text>
</comment>
<proteinExistence type="inferred from homology"/>
<gene>
    <name evidence="1" type="primary">mnmG</name>
    <name evidence="1" type="synonym">gidA</name>
    <name type="ordered locus">Bcen_2962</name>
</gene>
<accession>Q1BR97</accession>
<feature type="chain" id="PRO_1000016560" description="tRNA uridine 5-carboxymethylaminomethyl modification enzyme MnmG">
    <location>
        <begin position="1"/>
        <end position="656"/>
    </location>
</feature>
<feature type="binding site" evidence="1">
    <location>
        <begin position="13"/>
        <end position="18"/>
    </location>
    <ligand>
        <name>FAD</name>
        <dbReference type="ChEBI" id="CHEBI:57692"/>
    </ligand>
</feature>
<feature type="binding site" evidence="1">
    <location>
        <begin position="274"/>
        <end position="288"/>
    </location>
    <ligand>
        <name>NAD(+)</name>
        <dbReference type="ChEBI" id="CHEBI:57540"/>
    </ligand>
</feature>